<protein>
    <recommendedName>
        <fullName evidence="1">Putative pre-16S rRNA nuclease</fullName>
        <ecNumber evidence="1">3.1.-.-</ecNumber>
    </recommendedName>
</protein>
<name>YQGF_CLASE</name>
<proteinExistence type="inferred from homology"/>
<accession>B0REK3</accession>
<organism>
    <name type="scientific">Clavibacter sepedonicus</name>
    <name type="common">Clavibacter michiganensis subsp. sepedonicus</name>
    <dbReference type="NCBI Taxonomy" id="31964"/>
    <lineage>
        <taxon>Bacteria</taxon>
        <taxon>Bacillati</taxon>
        <taxon>Actinomycetota</taxon>
        <taxon>Actinomycetes</taxon>
        <taxon>Micrococcales</taxon>
        <taxon>Microbacteriaceae</taxon>
        <taxon>Clavibacter</taxon>
    </lineage>
</organism>
<keyword id="KW-0963">Cytoplasm</keyword>
<keyword id="KW-0378">Hydrolase</keyword>
<keyword id="KW-0540">Nuclease</keyword>
<keyword id="KW-0690">Ribosome biogenesis</keyword>
<dbReference type="EC" id="3.1.-.-" evidence="1"/>
<dbReference type="EMBL" id="AM849034">
    <property type="protein sequence ID" value="CAQ00850.1"/>
    <property type="molecule type" value="Genomic_DNA"/>
</dbReference>
<dbReference type="SMR" id="B0REK3"/>
<dbReference type="STRING" id="31964.CMS0730"/>
<dbReference type="KEGG" id="cms:CMS0730"/>
<dbReference type="eggNOG" id="COG0816">
    <property type="taxonomic scope" value="Bacteria"/>
</dbReference>
<dbReference type="HOGENOM" id="CLU_098240_0_0_11"/>
<dbReference type="OrthoDB" id="9790539at2"/>
<dbReference type="Proteomes" id="UP000001318">
    <property type="component" value="Chromosome"/>
</dbReference>
<dbReference type="GO" id="GO:0005829">
    <property type="term" value="C:cytosol"/>
    <property type="evidence" value="ECO:0007669"/>
    <property type="project" value="TreeGrafter"/>
</dbReference>
<dbReference type="GO" id="GO:0004518">
    <property type="term" value="F:nuclease activity"/>
    <property type="evidence" value="ECO:0007669"/>
    <property type="project" value="UniProtKB-KW"/>
</dbReference>
<dbReference type="GO" id="GO:0000967">
    <property type="term" value="P:rRNA 5'-end processing"/>
    <property type="evidence" value="ECO:0007669"/>
    <property type="project" value="UniProtKB-UniRule"/>
</dbReference>
<dbReference type="CDD" id="cd16964">
    <property type="entry name" value="YqgF"/>
    <property type="match status" value="1"/>
</dbReference>
<dbReference type="Gene3D" id="3.30.420.140">
    <property type="entry name" value="YqgF/RNase H-like domain"/>
    <property type="match status" value="1"/>
</dbReference>
<dbReference type="HAMAP" id="MF_00651">
    <property type="entry name" value="Nuclease_YqgF"/>
    <property type="match status" value="1"/>
</dbReference>
<dbReference type="InterPro" id="IPR012337">
    <property type="entry name" value="RNaseH-like_sf"/>
</dbReference>
<dbReference type="InterPro" id="IPR005227">
    <property type="entry name" value="YqgF"/>
</dbReference>
<dbReference type="InterPro" id="IPR006641">
    <property type="entry name" value="YqgF/RNaseH-like_dom"/>
</dbReference>
<dbReference type="InterPro" id="IPR037027">
    <property type="entry name" value="YqgF/RNaseH-like_dom_sf"/>
</dbReference>
<dbReference type="NCBIfam" id="TIGR00250">
    <property type="entry name" value="RNAse_H_YqgF"/>
    <property type="match status" value="1"/>
</dbReference>
<dbReference type="PANTHER" id="PTHR33317">
    <property type="entry name" value="POLYNUCLEOTIDYL TRANSFERASE, RIBONUCLEASE H-LIKE SUPERFAMILY PROTEIN"/>
    <property type="match status" value="1"/>
</dbReference>
<dbReference type="PANTHER" id="PTHR33317:SF4">
    <property type="entry name" value="POLYNUCLEOTIDYL TRANSFERASE, RIBONUCLEASE H-LIKE SUPERFAMILY PROTEIN"/>
    <property type="match status" value="1"/>
</dbReference>
<dbReference type="Pfam" id="PF03652">
    <property type="entry name" value="RuvX"/>
    <property type="match status" value="1"/>
</dbReference>
<dbReference type="SMART" id="SM00732">
    <property type="entry name" value="YqgFc"/>
    <property type="match status" value="1"/>
</dbReference>
<dbReference type="SUPFAM" id="SSF53098">
    <property type="entry name" value="Ribonuclease H-like"/>
    <property type="match status" value="1"/>
</dbReference>
<evidence type="ECO:0000255" key="1">
    <source>
        <dbReference type="HAMAP-Rule" id="MF_00651"/>
    </source>
</evidence>
<evidence type="ECO:0000256" key="2">
    <source>
        <dbReference type="SAM" id="MobiDB-lite"/>
    </source>
</evidence>
<sequence length="161" mass="16920">MRVGSRLAVDVGKARIGLARSDPHGLIATPVETVPRDAAGSADVRRILEVAAEIDCTELVVGLPLALSGRATASTDDAEGFARRLADATEIRVRLVDERLSTVSAQGALRASGRGSRKQKPVIDQVAAVIILQHALETERAAGSPPGALVPRNRVDPDRHA</sequence>
<reference key="1">
    <citation type="journal article" date="2008" name="J. Bacteriol.">
        <title>Genome of the actinomycete plant pathogen Clavibacter michiganensis subsp. sepedonicus suggests recent niche adaptation.</title>
        <authorList>
            <person name="Bentley S.D."/>
            <person name="Corton C."/>
            <person name="Brown S.E."/>
            <person name="Barron A."/>
            <person name="Clark L."/>
            <person name="Doggett J."/>
            <person name="Harris B."/>
            <person name="Ormond D."/>
            <person name="Quail M.A."/>
            <person name="May G."/>
            <person name="Francis D."/>
            <person name="Knudson D."/>
            <person name="Parkhill J."/>
            <person name="Ishimaru C.A."/>
        </authorList>
    </citation>
    <scope>NUCLEOTIDE SEQUENCE [LARGE SCALE GENOMIC DNA]</scope>
    <source>
        <strain>ATCC 33113 / DSM 20744 / JCM 9667 / LMG 2889 / ICMP 2535 / C-1</strain>
    </source>
</reference>
<feature type="chain" id="PRO_1000082739" description="Putative pre-16S rRNA nuclease">
    <location>
        <begin position="1"/>
        <end position="161"/>
    </location>
</feature>
<feature type="region of interest" description="Disordered" evidence="2">
    <location>
        <begin position="142"/>
        <end position="161"/>
    </location>
</feature>
<comment type="function">
    <text evidence="1">Could be a nuclease involved in processing of the 5'-end of pre-16S rRNA.</text>
</comment>
<comment type="subcellular location">
    <subcellularLocation>
        <location evidence="1">Cytoplasm</location>
    </subcellularLocation>
</comment>
<comment type="similarity">
    <text evidence="1">Belongs to the YqgF nuclease family.</text>
</comment>
<gene>
    <name type="ordered locus">CMS0730</name>
</gene>